<comment type="function">
    <text evidence="1">DNA-dependent RNA polymerase catalyzes the transcription of DNA into RNA using the four ribonucleoside triphosphates as substrates.</text>
</comment>
<comment type="catalytic activity">
    <reaction evidence="1">
        <text>RNA(n) + a ribonucleoside 5'-triphosphate = RNA(n+1) + diphosphate</text>
        <dbReference type="Rhea" id="RHEA:21248"/>
        <dbReference type="Rhea" id="RHEA-COMP:14527"/>
        <dbReference type="Rhea" id="RHEA-COMP:17342"/>
        <dbReference type="ChEBI" id="CHEBI:33019"/>
        <dbReference type="ChEBI" id="CHEBI:61557"/>
        <dbReference type="ChEBI" id="CHEBI:140395"/>
        <dbReference type="EC" id="2.7.7.6"/>
    </reaction>
</comment>
<comment type="cofactor">
    <cofactor evidence="1">
        <name>Mg(2+)</name>
        <dbReference type="ChEBI" id="CHEBI:18420"/>
    </cofactor>
    <text evidence="1">Binds 1 Mg(2+) ion per subunit.</text>
</comment>
<comment type="cofactor">
    <cofactor evidence="1">
        <name>Zn(2+)</name>
        <dbReference type="ChEBI" id="CHEBI:29105"/>
    </cofactor>
    <text evidence="1">Binds 2 Zn(2+) ions per subunit.</text>
</comment>
<comment type="subunit">
    <text evidence="1">The RNAP catalytic core consists of 2 alpha, 1 beta, 1 beta' and 1 omega subunit. When a sigma factor is associated with the core the holoenzyme is formed, which can initiate transcription.</text>
</comment>
<comment type="similarity">
    <text evidence="1">Belongs to the RNA polymerase beta' chain family.</text>
</comment>
<protein>
    <recommendedName>
        <fullName evidence="1">DNA-directed RNA polymerase subunit beta'</fullName>
        <shortName evidence="1">RNAP subunit beta'</shortName>
        <ecNumber evidence="1">2.7.7.6</ecNumber>
    </recommendedName>
    <alternativeName>
        <fullName evidence="1">RNA polymerase subunit beta'</fullName>
    </alternativeName>
    <alternativeName>
        <fullName evidence="1">Transcriptase subunit beta'</fullName>
    </alternativeName>
</protein>
<keyword id="KW-0240">DNA-directed RNA polymerase</keyword>
<keyword id="KW-0460">Magnesium</keyword>
<keyword id="KW-0479">Metal-binding</keyword>
<keyword id="KW-0548">Nucleotidyltransferase</keyword>
<keyword id="KW-1185">Reference proteome</keyword>
<keyword id="KW-0804">Transcription</keyword>
<keyword id="KW-0808">Transferase</keyword>
<keyword id="KW-0862">Zinc</keyword>
<proteinExistence type="inferred from homology"/>
<organism>
    <name type="scientific">Shewanella pealeana (strain ATCC 700345 / ANG-SQ1)</name>
    <dbReference type="NCBI Taxonomy" id="398579"/>
    <lineage>
        <taxon>Bacteria</taxon>
        <taxon>Pseudomonadati</taxon>
        <taxon>Pseudomonadota</taxon>
        <taxon>Gammaproteobacteria</taxon>
        <taxon>Alteromonadales</taxon>
        <taxon>Shewanellaceae</taxon>
        <taxon>Shewanella</taxon>
    </lineage>
</organism>
<feature type="chain" id="PRO_1000086418" description="DNA-directed RNA polymerase subunit beta'">
    <location>
        <begin position="1"/>
        <end position="1404"/>
    </location>
</feature>
<feature type="binding site" evidence="1">
    <location>
        <position position="70"/>
    </location>
    <ligand>
        <name>Zn(2+)</name>
        <dbReference type="ChEBI" id="CHEBI:29105"/>
        <label>1</label>
    </ligand>
</feature>
<feature type="binding site" evidence="1">
    <location>
        <position position="72"/>
    </location>
    <ligand>
        <name>Zn(2+)</name>
        <dbReference type="ChEBI" id="CHEBI:29105"/>
        <label>1</label>
    </ligand>
</feature>
<feature type="binding site" evidence="1">
    <location>
        <position position="85"/>
    </location>
    <ligand>
        <name>Zn(2+)</name>
        <dbReference type="ChEBI" id="CHEBI:29105"/>
        <label>1</label>
    </ligand>
</feature>
<feature type="binding site" evidence="1">
    <location>
        <position position="88"/>
    </location>
    <ligand>
        <name>Zn(2+)</name>
        <dbReference type="ChEBI" id="CHEBI:29105"/>
        <label>1</label>
    </ligand>
</feature>
<feature type="binding site" evidence="1">
    <location>
        <position position="460"/>
    </location>
    <ligand>
        <name>Mg(2+)</name>
        <dbReference type="ChEBI" id="CHEBI:18420"/>
    </ligand>
</feature>
<feature type="binding site" evidence="1">
    <location>
        <position position="462"/>
    </location>
    <ligand>
        <name>Mg(2+)</name>
        <dbReference type="ChEBI" id="CHEBI:18420"/>
    </ligand>
</feature>
<feature type="binding site" evidence="1">
    <location>
        <position position="464"/>
    </location>
    <ligand>
        <name>Mg(2+)</name>
        <dbReference type="ChEBI" id="CHEBI:18420"/>
    </ligand>
</feature>
<feature type="binding site" evidence="1">
    <location>
        <position position="814"/>
    </location>
    <ligand>
        <name>Zn(2+)</name>
        <dbReference type="ChEBI" id="CHEBI:29105"/>
        <label>2</label>
    </ligand>
</feature>
<feature type="binding site" evidence="1">
    <location>
        <position position="888"/>
    </location>
    <ligand>
        <name>Zn(2+)</name>
        <dbReference type="ChEBI" id="CHEBI:29105"/>
        <label>2</label>
    </ligand>
</feature>
<feature type="binding site" evidence="1">
    <location>
        <position position="895"/>
    </location>
    <ligand>
        <name>Zn(2+)</name>
        <dbReference type="ChEBI" id="CHEBI:29105"/>
        <label>2</label>
    </ligand>
</feature>
<feature type="binding site" evidence="1">
    <location>
        <position position="898"/>
    </location>
    <ligand>
        <name>Zn(2+)</name>
        <dbReference type="ChEBI" id="CHEBI:29105"/>
        <label>2</label>
    </ligand>
</feature>
<gene>
    <name evidence="1" type="primary">rpoC</name>
    <name type="ordered locus">Spea_0178</name>
</gene>
<reference key="1">
    <citation type="submission" date="2007-10" db="EMBL/GenBank/DDBJ databases">
        <title>Complete sequence of Shewanella pealeana ATCC 700345.</title>
        <authorList>
            <consortium name="US DOE Joint Genome Institute"/>
            <person name="Copeland A."/>
            <person name="Lucas S."/>
            <person name="Lapidus A."/>
            <person name="Barry K."/>
            <person name="Glavina del Rio T."/>
            <person name="Dalin E."/>
            <person name="Tice H."/>
            <person name="Pitluck S."/>
            <person name="Chertkov O."/>
            <person name="Brettin T."/>
            <person name="Bruce D."/>
            <person name="Detter J.C."/>
            <person name="Han C."/>
            <person name="Schmutz J."/>
            <person name="Larimer F."/>
            <person name="Land M."/>
            <person name="Hauser L."/>
            <person name="Kyrpides N."/>
            <person name="Kim E."/>
            <person name="Zhao J.-S.Z."/>
            <person name="Manno D."/>
            <person name="Hawari J."/>
            <person name="Richardson P."/>
        </authorList>
    </citation>
    <scope>NUCLEOTIDE SEQUENCE [LARGE SCALE GENOMIC DNA]</scope>
    <source>
        <strain>ATCC 700345 / ANG-SQ1</strain>
    </source>
</reference>
<name>RPOC_SHEPA</name>
<sequence length="1404" mass="155186">MKDLLKFLKQQSKTEEFEGIKIGLASPDLIRSWSFGEVKKPETINYRTFKPEREGLFCARIFGPVKDYECLCGKYKRLKHRGVICEKCGVEVTQTKVRRERMGHIDLASPVAHIWFLKSLPSRIGLMLDMTLRDIERVLYFESFVVIEPGMTSLERGQMLTEENYLDALEEYGDEFDAKMGAEAVLELLRAIELEKEIEMMREELPSINSETRRKKVTKRLKLIEAFFTSGNKPEWMILKVLPVLPPDLRPLVPLDGGRFATSDLNDLYRRVINRNNRLKRLLDLAAPDIIVRNEKRMLQESVDALLDNGRRGRAITGSNKRPLKSLADMIKGKQGRFRQNLLGKRVDYSGRSVITVGPTLRLHQCGLPKKMALELFKPFIYGKLEGRGLATTIKAAKKMVEREVPEVWDVLDDVIREHPVMLNRAPTLHRLGIQAFEPVLIEGKAIQLHPLVCAAYNADFDGDQMAVHVPLTLEAQLEARSLMMSTNNILSPANGEPVITPSQDVVLGLYYTSRERINGKGEGMAFSDVAEAEKAYRTGVAELHARVKVRITETATNEAGEKVKTRRIVDTTVGRALLSQILPKGLSYDLVNQNMGKKQISKLLNTCYRQLGLKDTVIFADQLMYTGFHFATISGASVGIDDMVIPDEKYTLVADAEAEVLEIQEQFQSGLVTAGERYNKVIDIWASANEKVSKAMMANLSKETVVNRDGVEEQQESFNSIYMMADSGARGSAAQIRQLAGMRGLMAKPDGSIIETPIVANFREGLNVSQYFISTHGARKGLADTALKTANSGYLTRRLVDVAQDLVVIEDDCGTFEGLTMKPLIEGGDVVEPLRERVLGRVVAQDVFKPGTEEVLVPRNTLLDEAWCDIVEDNSIDEMIVRSVISCDTDFGVCKACYGRDLARGHIINQGEAIGVVAAQSIGEPGTQLTMRTFHIGGAASRASAENNVQVKNSGTLKLHNAKYVTNSNGKLVIVSRSSELAIIDELGREKERYKVPYGTVLEKLEDDGVSAGEIIAKWDPHTHPIISEVAGSIKFVDMIEGVTMTRQTDELTGLSSIVVLEVGQRPTAGKEMRPMIRLVAADGGDLMIPGTEVPAQYFLPGHAIVNLDDNAPINVGDALARIPQESSKTRDITGGLPRVADLFEARKPKEPAILAEVSGTISFGKETKGKRRLVITPADGGEHYEEMIPKWRNLNVFEGEKVERGEVIADGPEAAHDILRLRGIHNVANYIVNEVQDVYRLQGVKINDKHIEVIIRQMLRKCEIVDAGDSEFLPGEQAEVSRVKIANRELEAQGKQPATFERELLGITKASLATESFISAASFQETTRVLTEAAVGGKSDKLRGLKENVIVGRLIPAGTGYSYHQKRAEAAAKPAATEAPAISASEAEQNLADLLNLAGSND</sequence>
<accession>A8GYX0</accession>
<dbReference type="EC" id="2.7.7.6" evidence="1"/>
<dbReference type="EMBL" id="CP000851">
    <property type="protein sequence ID" value="ABV85507.1"/>
    <property type="molecule type" value="Genomic_DNA"/>
</dbReference>
<dbReference type="RefSeq" id="WP_012153453.1">
    <property type="nucleotide sequence ID" value="NC_009901.1"/>
</dbReference>
<dbReference type="SMR" id="A8GYX0"/>
<dbReference type="STRING" id="398579.Spea_0178"/>
<dbReference type="KEGG" id="spl:Spea_0178"/>
<dbReference type="eggNOG" id="COG0086">
    <property type="taxonomic scope" value="Bacteria"/>
</dbReference>
<dbReference type="HOGENOM" id="CLU_000524_3_1_6"/>
<dbReference type="OrthoDB" id="9815296at2"/>
<dbReference type="Proteomes" id="UP000002608">
    <property type="component" value="Chromosome"/>
</dbReference>
<dbReference type="GO" id="GO:0000428">
    <property type="term" value="C:DNA-directed RNA polymerase complex"/>
    <property type="evidence" value="ECO:0007669"/>
    <property type="project" value="UniProtKB-KW"/>
</dbReference>
<dbReference type="GO" id="GO:0003677">
    <property type="term" value="F:DNA binding"/>
    <property type="evidence" value="ECO:0007669"/>
    <property type="project" value="UniProtKB-UniRule"/>
</dbReference>
<dbReference type="GO" id="GO:0003899">
    <property type="term" value="F:DNA-directed RNA polymerase activity"/>
    <property type="evidence" value="ECO:0007669"/>
    <property type="project" value="UniProtKB-UniRule"/>
</dbReference>
<dbReference type="GO" id="GO:0000287">
    <property type="term" value="F:magnesium ion binding"/>
    <property type="evidence" value="ECO:0007669"/>
    <property type="project" value="UniProtKB-UniRule"/>
</dbReference>
<dbReference type="GO" id="GO:0008270">
    <property type="term" value="F:zinc ion binding"/>
    <property type="evidence" value="ECO:0007669"/>
    <property type="project" value="UniProtKB-UniRule"/>
</dbReference>
<dbReference type="GO" id="GO:0006351">
    <property type="term" value="P:DNA-templated transcription"/>
    <property type="evidence" value="ECO:0007669"/>
    <property type="project" value="UniProtKB-UniRule"/>
</dbReference>
<dbReference type="CDD" id="cd02655">
    <property type="entry name" value="RNAP_beta'_C"/>
    <property type="match status" value="1"/>
</dbReference>
<dbReference type="CDD" id="cd01609">
    <property type="entry name" value="RNAP_beta'_N"/>
    <property type="match status" value="1"/>
</dbReference>
<dbReference type="FunFam" id="1.10.132.30:FF:000003">
    <property type="entry name" value="DNA-directed RNA polymerase subunit beta"/>
    <property type="match status" value="1"/>
</dbReference>
<dbReference type="FunFam" id="1.10.150.390:FF:000002">
    <property type="entry name" value="DNA-directed RNA polymerase subunit beta"/>
    <property type="match status" value="1"/>
</dbReference>
<dbReference type="FunFam" id="1.10.40.90:FF:000001">
    <property type="entry name" value="DNA-directed RNA polymerase subunit beta"/>
    <property type="match status" value="1"/>
</dbReference>
<dbReference type="FunFam" id="4.10.860.120:FF:000001">
    <property type="entry name" value="DNA-directed RNA polymerase subunit beta"/>
    <property type="match status" value="1"/>
</dbReference>
<dbReference type="Gene3D" id="1.10.132.30">
    <property type="match status" value="1"/>
</dbReference>
<dbReference type="Gene3D" id="1.10.150.390">
    <property type="match status" value="1"/>
</dbReference>
<dbReference type="Gene3D" id="1.10.1790.20">
    <property type="match status" value="1"/>
</dbReference>
<dbReference type="Gene3D" id="1.10.40.90">
    <property type="match status" value="1"/>
</dbReference>
<dbReference type="Gene3D" id="2.40.40.20">
    <property type="match status" value="1"/>
</dbReference>
<dbReference type="Gene3D" id="2.40.50.100">
    <property type="match status" value="3"/>
</dbReference>
<dbReference type="Gene3D" id="4.10.860.120">
    <property type="entry name" value="RNA polymerase II, clamp domain"/>
    <property type="match status" value="1"/>
</dbReference>
<dbReference type="Gene3D" id="1.10.274.100">
    <property type="entry name" value="RNA polymerase Rpb1, domain 3"/>
    <property type="match status" value="1"/>
</dbReference>
<dbReference type="HAMAP" id="MF_01322">
    <property type="entry name" value="RNApol_bact_RpoC"/>
    <property type="match status" value="1"/>
</dbReference>
<dbReference type="InterPro" id="IPR045867">
    <property type="entry name" value="DNA-dir_RpoC_beta_prime"/>
</dbReference>
<dbReference type="InterPro" id="IPR012754">
    <property type="entry name" value="DNA-dir_RpoC_beta_prime_bact"/>
</dbReference>
<dbReference type="InterPro" id="IPR000722">
    <property type="entry name" value="RNA_pol_asu"/>
</dbReference>
<dbReference type="InterPro" id="IPR006592">
    <property type="entry name" value="RNA_pol_N"/>
</dbReference>
<dbReference type="InterPro" id="IPR007080">
    <property type="entry name" value="RNA_pol_Rpb1_1"/>
</dbReference>
<dbReference type="InterPro" id="IPR007066">
    <property type="entry name" value="RNA_pol_Rpb1_3"/>
</dbReference>
<dbReference type="InterPro" id="IPR042102">
    <property type="entry name" value="RNA_pol_Rpb1_3_sf"/>
</dbReference>
<dbReference type="InterPro" id="IPR007083">
    <property type="entry name" value="RNA_pol_Rpb1_4"/>
</dbReference>
<dbReference type="InterPro" id="IPR007081">
    <property type="entry name" value="RNA_pol_Rpb1_5"/>
</dbReference>
<dbReference type="InterPro" id="IPR044893">
    <property type="entry name" value="RNA_pol_Rpb1_clamp_domain"/>
</dbReference>
<dbReference type="InterPro" id="IPR038120">
    <property type="entry name" value="Rpb1_funnel_sf"/>
</dbReference>
<dbReference type="NCBIfam" id="TIGR02386">
    <property type="entry name" value="rpoC_TIGR"/>
    <property type="match status" value="1"/>
</dbReference>
<dbReference type="PANTHER" id="PTHR19376">
    <property type="entry name" value="DNA-DIRECTED RNA POLYMERASE"/>
    <property type="match status" value="1"/>
</dbReference>
<dbReference type="PANTHER" id="PTHR19376:SF54">
    <property type="entry name" value="DNA-DIRECTED RNA POLYMERASE SUBUNIT BETA"/>
    <property type="match status" value="1"/>
</dbReference>
<dbReference type="Pfam" id="PF04997">
    <property type="entry name" value="RNA_pol_Rpb1_1"/>
    <property type="match status" value="1"/>
</dbReference>
<dbReference type="Pfam" id="PF00623">
    <property type="entry name" value="RNA_pol_Rpb1_2"/>
    <property type="match status" value="2"/>
</dbReference>
<dbReference type="Pfam" id="PF04983">
    <property type="entry name" value="RNA_pol_Rpb1_3"/>
    <property type="match status" value="1"/>
</dbReference>
<dbReference type="Pfam" id="PF05000">
    <property type="entry name" value="RNA_pol_Rpb1_4"/>
    <property type="match status" value="1"/>
</dbReference>
<dbReference type="Pfam" id="PF04998">
    <property type="entry name" value="RNA_pol_Rpb1_5"/>
    <property type="match status" value="1"/>
</dbReference>
<dbReference type="SMART" id="SM00663">
    <property type="entry name" value="RPOLA_N"/>
    <property type="match status" value="1"/>
</dbReference>
<dbReference type="SUPFAM" id="SSF64484">
    <property type="entry name" value="beta and beta-prime subunits of DNA dependent RNA-polymerase"/>
    <property type="match status" value="1"/>
</dbReference>
<evidence type="ECO:0000255" key="1">
    <source>
        <dbReference type="HAMAP-Rule" id="MF_01322"/>
    </source>
</evidence>